<proteinExistence type="evidence at protein level"/>
<dbReference type="EMBL" id="AK131219">
    <property type="protein sequence ID" value="BAD18406.1"/>
    <property type="molecule type" value="mRNA"/>
</dbReference>
<dbReference type="EMBL" id="BC033390">
    <property type="protein sequence ID" value="AAH33390.1"/>
    <property type="molecule type" value="mRNA"/>
</dbReference>
<dbReference type="CCDS" id="CCDS11141.1"/>
<dbReference type="RefSeq" id="NP_001291876.1">
    <property type="nucleotide sequence ID" value="NM_001304947.1"/>
</dbReference>
<dbReference type="RefSeq" id="NP_998762.1">
    <property type="nucleotide sequence ID" value="NM_213597.3"/>
</dbReference>
<dbReference type="SMR" id="Q6ZNG9"/>
<dbReference type="BioGRID" id="125885">
    <property type="interactions" value="11"/>
</dbReference>
<dbReference type="FunCoup" id="Q6ZNG9">
    <property type="interactions" value="91"/>
</dbReference>
<dbReference type="IntAct" id="Q6ZNG9">
    <property type="interactions" value="3"/>
</dbReference>
<dbReference type="STRING" id="9606.ENSP00000494883"/>
<dbReference type="iPTMnet" id="Q6ZNG9"/>
<dbReference type="PhosphoSitePlus" id="Q6ZNG9"/>
<dbReference type="BioMuta" id="KRBA2"/>
<dbReference type="DMDM" id="74710682"/>
<dbReference type="MassIVE" id="Q6ZNG9"/>
<dbReference type="PaxDb" id="9606-ENSP00000328017"/>
<dbReference type="PeptideAtlas" id="Q6ZNG9"/>
<dbReference type="Antibodypedia" id="12547">
    <property type="antibodies" value="77 antibodies from 17 providers"/>
</dbReference>
<dbReference type="DNASU" id="124751"/>
<dbReference type="Ensembl" id="ENST00000643221.1">
    <property type="protein sequence ID" value="ENSP00000494883.1"/>
    <property type="gene ID" value="ENSG00000184619.8"/>
</dbReference>
<dbReference type="GeneID" id="124751"/>
<dbReference type="KEGG" id="hsa:124751"/>
<dbReference type="UCSC" id="uc002glf.1">
    <property type="organism name" value="human"/>
</dbReference>
<dbReference type="AGR" id="HGNC:26989"/>
<dbReference type="CTD" id="124751"/>
<dbReference type="DisGeNET" id="124751"/>
<dbReference type="GeneCards" id="KRBA2"/>
<dbReference type="HGNC" id="HGNC:26989">
    <property type="gene designation" value="KRBA2"/>
</dbReference>
<dbReference type="HPA" id="ENSG00000184619">
    <property type="expression patterns" value="Tissue enriched (retina)"/>
</dbReference>
<dbReference type="MIM" id="620920">
    <property type="type" value="gene"/>
</dbReference>
<dbReference type="neXtProt" id="NX_Q6ZNG9"/>
<dbReference type="OpenTargets" id="ENSG00000184619"/>
<dbReference type="PharmGKB" id="PA162393680"/>
<dbReference type="VEuPathDB" id="HostDB:ENSG00000184619"/>
<dbReference type="eggNOG" id="KOG0017">
    <property type="taxonomic scope" value="Eukaryota"/>
</dbReference>
<dbReference type="GeneTree" id="ENSGT00940000163300"/>
<dbReference type="InParanoid" id="Q6ZNG9"/>
<dbReference type="OrthoDB" id="10000497at2759"/>
<dbReference type="PAN-GO" id="Q6ZNG9">
    <property type="GO annotations" value="0 GO annotations based on evolutionary models"/>
</dbReference>
<dbReference type="PhylomeDB" id="Q6ZNG9"/>
<dbReference type="TreeFam" id="TF323092"/>
<dbReference type="PathwayCommons" id="Q6ZNG9"/>
<dbReference type="SignaLink" id="Q6ZNG9"/>
<dbReference type="BioGRID-ORCS" id="124751">
    <property type="hits" value="11 hits in 1153 CRISPR screens"/>
</dbReference>
<dbReference type="ChiTaRS" id="KRBA2">
    <property type="organism name" value="human"/>
</dbReference>
<dbReference type="GenomeRNAi" id="124751"/>
<dbReference type="Pharos" id="Q6ZNG9">
    <property type="development level" value="Tdark"/>
</dbReference>
<dbReference type="PRO" id="PR:Q6ZNG9"/>
<dbReference type="Proteomes" id="UP000005640">
    <property type="component" value="Chromosome 17"/>
</dbReference>
<dbReference type="RNAct" id="Q6ZNG9">
    <property type="molecule type" value="protein"/>
</dbReference>
<dbReference type="Bgee" id="ENSG00000184619">
    <property type="expression patterns" value="Expressed in apex of heart and 107 other cell types or tissues"/>
</dbReference>
<dbReference type="ExpressionAtlas" id="Q6ZNG9">
    <property type="expression patterns" value="baseline and differential"/>
</dbReference>
<dbReference type="GO" id="GO:0003676">
    <property type="term" value="F:nucleic acid binding"/>
    <property type="evidence" value="ECO:0007669"/>
    <property type="project" value="InterPro"/>
</dbReference>
<dbReference type="GO" id="GO:0015074">
    <property type="term" value="P:DNA integration"/>
    <property type="evidence" value="ECO:0007669"/>
    <property type="project" value="InterPro"/>
</dbReference>
<dbReference type="GO" id="GO:0006355">
    <property type="term" value="P:regulation of DNA-templated transcription"/>
    <property type="evidence" value="ECO:0007669"/>
    <property type="project" value="InterPro"/>
</dbReference>
<dbReference type="CDD" id="cd07765">
    <property type="entry name" value="KRAB_A-box"/>
    <property type="match status" value="1"/>
</dbReference>
<dbReference type="Gene3D" id="3.30.420.10">
    <property type="entry name" value="Ribonuclease H-like superfamily/Ribonuclease H"/>
    <property type="match status" value="1"/>
</dbReference>
<dbReference type="InterPro" id="IPR001584">
    <property type="entry name" value="Integrase_cat-core"/>
</dbReference>
<dbReference type="InterPro" id="IPR001909">
    <property type="entry name" value="KRAB"/>
</dbReference>
<dbReference type="InterPro" id="IPR036051">
    <property type="entry name" value="KRAB_dom_sf"/>
</dbReference>
<dbReference type="InterPro" id="IPR050951">
    <property type="entry name" value="Retrovirus_Pol_polyprotein"/>
</dbReference>
<dbReference type="InterPro" id="IPR012337">
    <property type="entry name" value="RNaseH-like_sf"/>
</dbReference>
<dbReference type="InterPro" id="IPR036397">
    <property type="entry name" value="RNaseH_sf"/>
</dbReference>
<dbReference type="PANTHER" id="PTHR37984">
    <property type="entry name" value="PROTEIN CBG26694"/>
    <property type="match status" value="1"/>
</dbReference>
<dbReference type="PANTHER" id="PTHR37984:SF5">
    <property type="entry name" value="PROTEIN NYNRIN-LIKE"/>
    <property type="match status" value="1"/>
</dbReference>
<dbReference type="Pfam" id="PF01352">
    <property type="entry name" value="KRAB"/>
    <property type="match status" value="1"/>
</dbReference>
<dbReference type="SUPFAM" id="SSF109640">
    <property type="entry name" value="KRAB domain (Kruppel-associated box)"/>
    <property type="match status" value="1"/>
</dbReference>
<dbReference type="SUPFAM" id="SSF53098">
    <property type="entry name" value="Ribonuclease H-like"/>
    <property type="match status" value="1"/>
</dbReference>
<dbReference type="PROSITE" id="PS50994">
    <property type="entry name" value="INTEGRASE"/>
    <property type="match status" value="1"/>
</dbReference>
<gene>
    <name type="primary">KRBA2</name>
</gene>
<protein>
    <recommendedName>
        <fullName>KRAB-A domain-containing protein 2</fullName>
    </recommendedName>
</protein>
<organism>
    <name type="scientific">Homo sapiens</name>
    <name type="common">Human</name>
    <dbReference type="NCBI Taxonomy" id="9606"/>
    <lineage>
        <taxon>Eukaryota</taxon>
        <taxon>Metazoa</taxon>
        <taxon>Chordata</taxon>
        <taxon>Craniata</taxon>
        <taxon>Vertebrata</taxon>
        <taxon>Euteleostomi</taxon>
        <taxon>Mammalia</taxon>
        <taxon>Eutheria</taxon>
        <taxon>Euarchontoglires</taxon>
        <taxon>Primates</taxon>
        <taxon>Haplorrhini</taxon>
        <taxon>Catarrhini</taxon>
        <taxon>Hominidae</taxon>
        <taxon>Homo</taxon>
    </lineage>
</organism>
<evidence type="ECO:0000255" key="1"/>
<evidence type="ECO:0000255" key="2">
    <source>
        <dbReference type="PROSITE-ProRule" id="PRU00457"/>
    </source>
</evidence>
<evidence type="ECO:0000256" key="3">
    <source>
        <dbReference type="SAM" id="MobiDB-lite"/>
    </source>
</evidence>
<evidence type="ECO:0000305" key="4"/>
<evidence type="ECO:0007744" key="5">
    <source>
    </source>
</evidence>
<feature type="chain" id="PRO_0000300113" description="KRAB-A domain-containing protein 2">
    <location>
        <begin position="1"/>
        <end position="492"/>
    </location>
</feature>
<feature type="domain" description="KRAB">
    <location>
        <begin position="36"/>
        <end position="117"/>
    </location>
</feature>
<feature type="domain" description="Integrase catalytic" evidence="2">
    <location>
        <begin position="247"/>
        <end position="415"/>
    </location>
</feature>
<feature type="region of interest" description="Disordered" evidence="3">
    <location>
        <begin position="455"/>
        <end position="492"/>
    </location>
</feature>
<feature type="coiled-coil region" evidence="1">
    <location>
        <begin position="427"/>
        <end position="457"/>
    </location>
</feature>
<feature type="compositionally biased region" description="Basic and acidic residues" evidence="3">
    <location>
        <begin position="455"/>
        <end position="465"/>
    </location>
</feature>
<feature type="compositionally biased region" description="Polar residues" evidence="3">
    <location>
        <begin position="479"/>
        <end position="492"/>
    </location>
</feature>
<feature type="modified residue" description="Phosphoserine" evidence="5">
    <location>
        <position position="115"/>
    </location>
</feature>
<feature type="modified residue" description="Phosphothreonine" evidence="5">
    <location>
        <position position="117"/>
    </location>
</feature>
<feature type="sequence variant" id="VAR_051087" description="In dbSNP:rs370752.">
    <original>T</original>
    <variation>M</variation>
    <location>
        <position position="435"/>
    </location>
</feature>
<name>KRBA2_HUMAN</name>
<comment type="interaction">
    <interactant intactId="EBI-13309813">
        <id>Q6ZNG9</id>
    </interactant>
    <interactant intactId="EBI-12094670">
        <id>Q8WUI4-6</id>
        <label>HDAC7</label>
    </interactant>
    <organismsDiffer>false</organismsDiffer>
    <experiments>3</experiments>
</comment>
<comment type="caution">
    <text evidence="4">It is uncertain whether Met-1 or Met-46 is the initiator.</text>
</comment>
<accession>Q6ZNG9</accession>
<accession>Q8IYY0</accession>
<sequence>MPSFLVPSLVSSPVLLKLLFSPGPKTIWSLWQQPMLFQEATAFENMTKDWNYLEGSQKDCYRDTMLDSYENTVPQGSFLQLSMMPQRAGNDPPGVSNASEMEMEISNMREKFLMSVTKLVESKSYNSKVFSKEKYFQTIKEVKEAKEKGKKSSRDYRRAAKYDVISVQGTEKLIEATHGERDRIRYYVHKEELFDILHDTHLSIGHGGRTRMLKELQGKYGNVTKEVIVLYLTLCKQCHQKNPVPKRGLAPKPMTFKDIDSTCQVEILDMQSSADGEFKFILYYQDHSTKFIILRPLRTKQAHEVVSVLLDIFTILGTPSVLDSDSGVEFTNQVVHELNELWPDLKIVSGKYHPGQSQGSLEGASRDVKNMISTWMQSNHSCHWAKGLRFMQMVRNQAFDVSLQQSPFEAMFGYKAKFGLYSSNLPRETVATLQTEEELEIAEEQLENSLWIRQEERAEIGADRSDMDDDMDPTPEASEPSTSQGTSGLLCW</sequence>
<reference key="1">
    <citation type="journal article" date="2004" name="Nat. Genet.">
        <title>Complete sequencing and characterization of 21,243 full-length human cDNAs.</title>
        <authorList>
            <person name="Ota T."/>
            <person name="Suzuki Y."/>
            <person name="Nishikawa T."/>
            <person name="Otsuki T."/>
            <person name="Sugiyama T."/>
            <person name="Irie R."/>
            <person name="Wakamatsu A."/>
            <person name="Hayashi K."/>
            <person name="Sato H."/>
            <person name="Nagai K."/>
            <person name="Kimura K."/>
            <person name="Makita H."/>
            <person name="Sekine M."/>
            <person name="Obayashi M."/>
            <person name="Nishi T."/>
            <person name="Shibahara T."/>
            <person name="Tanaka T."/>
            <person name="Ishii S."/>
            <person name="Yamamoto J."/>
            <person name="Saito K."/>
            <person name="Kawai Y."/>
            <person name="Isono Y."/>
            <person name="Nakamura Y."/>
            <person name="Nagahari K."/>
            <person name="Murakami K."/>
            <person name="Yasuda T."/>
            <person name="Iwayanagi T."/>
            <person name="Wagatsuma M."/>
            <person name="Shiratori A."/>
            <person name="Sudo H."/>
            <person name="Hosoiri T."/>
            <person name="Kaku Y."/>
            <person name="Kodaira H."/>
            <person name="Kondo H."/>
            <person name="Sugawara M."/>
            <person name="Takahashi M."/>
            <person name="Kanda K."/>
            <person name="Yokoi T."/>
            <person name="Furuya T."/>
            <person name="Kikkawa E."/>
            <person name="Omura Y."/>
            <person name="Abe K."/>
            <person name="Kamihara K."/>
            <person name="Katsuta N."/>
            <person name="Sato K."/>
            <person name="Tanikawa M."/>
            <person name="Yamazaki M."/>
            <person name="Ninomiya K."/>
            <person name="Ishibashi T."/>
            <person name="Yamashita H."/>
            <person name="Murakawa K."/>
            <person name="Fujimori K."/>
            <person name="Tanai H."/>
            <person name="Kimata M."/>
            <person name="Watanabe M."/>
            <person name="Hiraoka S."/>
            <person name="Chiba Y."/>
            <person name="Ishida S."/>
            <person name="Ono Y."/>
            <person name="Takiguchi S."/>
            <person name="Watanabe S."/>
            <person name="Yosida M."/>
            <person name="Hotuta T."/>
            <person name="Kusano J."/>
            <person name="Kanehori K."/>
            <person name="Takahashi-Fujii A."/>
            <person name="Hara H."/>
            <person name="Tanase T.-O."/>
            <person name="Nomura Y."/>
            <person name="Togiya S."/>
            <person name="Komai F."/>
            <person name="Hara R."/>
            <person name="Takeuchi K."/>
            <person name="Arita M."/>
            <person name="Imose N."/>
            <person name="Musashino K."/>
            <person name="Yuuki H."/>
            <person name="Oshima A."/>
            <person name="Sasaki N."/>
            <person name="Aotsuka S."/>
            <person name="Yoshikawa Y."/>
            <person name="Matsunawa H."/>
            <person name="Ichihara T."/>
            <person name="Shiohata N."/>
            <person name="Sano S."/>
            <person name="Moriya S."/>
            <person name="Momiyama H."/>
            <person name="Satoh N."/>
            <person name="Takami S."/>
            <person name="Terashima Y."/>
            <person name="Suzuki O."/>
            <person name="Nakagawa S."/>
            <person name="Senoh A."/>
            <person name="Mizoguchi H."/>
            <person name="Goto Y."/>
            <person name="Shimizu F."/>
            <person name="Wakebe H."/>
            <person name="Hishigaki H."/>
            <person name="Watanabe T."/>
            <person name="Sugiyama A."/>
            <person name="Takemoto M."/>
            <person name="Kawakami B."/>
            <person name="Yamazaki M."/>
            <person name="Watanabe K."/>
            <person name="Kumagai A."/>
            <person name="Itakura S."/>
            <person name="Fukuzumi Y."/>
            <person name="Fujimori Y."/>
            <person name="Komiyama M."/>
            <person name="Tashiro H."/>
            <person name="Tanigami A."/>
            <person name="Fujiwara T."/>
            <person name="Ono T."/>
            <person name="Yamada K."/>
            <person name="Fujii Y."/>
            <person name="Ozaki K."/>
            <person name="Hirao M."/>
            <person name="Ohmori Y."/>
            <person name="Kawabata A."/>
            <person name="Hikiji T."/>
            <person name="Kobatake N."/>
            <person name="Inagaki H."/>
            <person name="Ikema Y."/>
            <person name="Okamoto S."/>
            <person name="Okitani R."/>
            <person name="Kawakami T."/>
            <person name="Noguchi S."/>
            <person name="Itoh T."/>
            <person name="Shigeta K."/>
            <person name="Senba T."/>
            <person name="Matsumura K."/>
            <person name="Nakajima Y."/>
            <person name="Mizuno T."/>
            <person name="Morinaga M."/>
            <person name="Sasaki M."/>
            <person name="Togashi T."/>
            <person name="Oyama M."/>
            <person name="Hata H."/>
            <person name="Watanabe M."/>
            <person name="Komatsu T."/>
            <person name="Mizushima-Sugano J."/>
            <person name="Satoh T."/>
            <person name="Shirai Y."/>
            <person name="Takahashi Y."/>
            <person name="Nakagawa K."/>
            <person name="Okumura K."/>
            <person name="Nagase T."/>
            <person name="Nomura N."/>
            <person name="Kikuchi H."/>
            <person name="Masuho Y."/>
            <person name="Yamashita R."/>
            <person name="Nakai K."/>
            <person name="Yada T."/>
            <person name="Nakamura Y."/>
            <person name="Ohara O."/>
            <person name="Isogai T."/>
            <person name="Sugano S."/>
        </authorList>
    </citation>
    <scope>NUCLEOTIDE SEQUENCE [LARGE SCALE MRNA]</scope>
</reference>
<reference key="2">
    <citation type="journal article" date="2004" name="Genome Res.">
        <title>The status, quality, and expansion of the NIH full-length cDNA project: the Mammalian Gene Collection (MGC).</title>
        <authorList>
            <consortium name="The MGC Project Team"/>
        </authorList>
    </citation>
    <scope>NUCLEOTIDE SEQUENCE [LARGE SCALE MRNA] OF 54-492</scope>
    <source>
        <tissue>Skin</tissue>
    </source>
</reference>
<reference key="3">
    <citation type="journal article" date="2008" name="Proc. Natl. Acad. Sci. U.S.A.">
        <title>A quantitative atlas of mitotic phosphorylation.</title>
        <authorList>
            <person name="Dephoure N."/>
            <person name="Zhou C."/>
            <person name="Villen J."/>
            <person name="Beausoleil S.A."/>
            <person name="Bakalarski C.E."/>
            <person name="Elledge S.J."/>
            <person name="Gygi S.P."/>
        </authorList>
    </citation>
    <scope>PHOSPHORYLATION [LARGE SCALE ANALYSIS] AT SER-115 AND THR-117</scope>
    <scope>IDENTIFICATION BY MASS SPECTROMETRY [LARGE SCALE ANALYSIS]</scope>
    <source>
        <tissue>Cervix carcinoma</tissue>
    </source>
</reference>
<keyword id="KW-0175">Coiled coil</keyword>
<keyword id="KW-0597">Phosphoprotein</keyword>
<keyword id="KW-1267">Proteomics identification</keyword>
<keyword id="KW-1185">Reference proteome</keyword>